<organism>
    <name type="scientific">Pseudomonas putida</name>
    <name type="common">Arthrobacter siderocapsulatus</name>
    <dbReference type="NCBI Taxonomy" id="303"/>
    <lineage>
        <taxon>Bacteria</taxon>
        <taxon>Pseudomonadati</taxon>
        <taxon>Pseudomonadota</taxon>
        <taxon>Gammaproteobacteria</taxon>
        <taxon>Pseudomonadales</taxon>
        <taxon>Pseudomonadaceae</taxon>
        <taxon>Pseudomonas</taxon>
    </lineage>
</organism>
<evidence type="ECO:0000255" key="1">
    <source>
        <dbReference type="HAMAP-Rule" id="MF_00211"/>
    </source>
</evidence>
<reference key="1">
    <citation type="journal article" date="1990" name="J. Bacteriol.">
        <title>Evolutionary differences in chromosomal locations of four early genes of the tryptophan pathway in fluorescent pseudomonads: DNA sequences and characterization of Pseudomonas putida trpE and trpGDC.</title>
        <authorList>
            <person name="Essar D.W."/>
            <person name="Eberly L."/>
            <person name="Crawford I.P."/>
        </authorList>
    </citation>
    <scope>NUCLEOTIDE SEQUENCE [GENOMIC DNA]</scope>
    <source>
        <strain>ATCC 23287 / C1S</strain>
    </source>
</reference>
<comment type="function">
    <text evidence="1">Catalyzes the transfer of the phosphoribosyl group of 5-phosphorylribose-1-pyrophosphate (PRPP) to anthranilate to yield N-(5'-phosphoribosyl)-anthranilate (PRA).</text>
</comment>
<comment type="catalytic activity">
    <reaction evidence="1">
        <text>N-(5-phospho-beta-D-ribosyl)anthranilate + diphosphate = 5-phospho-alpha-D-ribose 1-diphosphate + anthranilate</text>
        <dbReference type="Rhea" id="RHEA:11768"/>
        <dbReference type="ChEBI" id="CHEBI:16567"/>
        <dbReference type="ChEBI" id="CHEBI:18277"/>
        <dbReference type="ChEBI" id="CHEBI:33019"/>
        <dbReference type="ChEBI" id="CHEBI:58017"/>
        <dbReference type="EC" id="2.4.2.18"/>
    </reaction>
</comment>
<comment type="cofactor">
    <cofactor evidence="1">
        <name>Mg(2+)</name>
        <dbReference type="ChEBI" id="CHEBI:18420"/>
    </cofactor>
    <text evidence="1">Binds 2 magnesium ions per monomer.</text>
</comment>
<comment type="pathway">
    <text evidence="1">Amino-acid biosynthesis; L-tryptophan biosynthesis; L-tryptophan from chorismate: step 2/5.</text>
</comment>
<comment type="subunit">
    <text evidence="1">Homodimer.</text>
</comment>
<comment type="similarity">
    <text evidence="1">Belongs to the anthranilate phosphoribosyltransferase family.</text>
</comment>
<keyword id="KW-0028">Amino-acid biosynthesis</keyword>
<keyword id="KW-0057">Aromatic amino acid biosynthesis</keyword>
<keyword id="KW-0328">Glycosyltransferase</keyword>
<keyword id="KW-0460">Magnesium</keyword>
<keyword id="KW-0479">Metal-binding</keyword>
<keyword id="KW-0808">Transferase</keyword>
<keyword id="KW-0822">Tryptophan biosynthesis</keyword>
<feature type="chain" id="PRO_0000154470" description="Anthranilate phosphoribosyltransferase">
    <location>
        <begin position="1"/>
        <end position="349"/>
    </location>
</feature>
<feature type="binding site" evidence="1">
    <location>
        <position position="82"/>
    </location>
    <ligand>
        <name>5-phospho-alpha-D-ribose 1-diphosphate</name>
        <dbReference type="ChEBI" id="CHEBI:58017"/>
    </ligand>
</feature>
<feature type="binding site" evidence="1">
    <location>
        <position position="82"/>
    </location>
    <ligand>
        <name>anthranilate</name>
        <dbReference type="ChEBI" id="CHEBI:16567"/>
        <label>1</label>
    </ligand>
</feature>
<feature type="binding site" evidence="1">
    <location>
        <begin position="85"/>
        <end position="86"/>
    </location>
    <ligand>
        <name>5-phospho-alpha-D-ribose 1-diphosphate</name>
        <dbReference type="ChEBI" id="CHEBI:58017"/>
    </ligand>
</feature>
<feature type="binding site" evidence="1">
    <location>
        <begin position="92"/>
        <end position="95"/>
    </location>
    <ligand>
        <name>5-phospho-alpha-D-ribose 1-diphosphate</name>
        <dbReference type="ChEBI" id="CHEBI:58017"/>
    </ligand>
</feature>
<feature type="binding site" evidence="1">
    <location>
        <position position="94"/>
    </location>
    <ligand>
        <name>Mg(2+)</name>
        <dbReference type="ChEBI" id="CHEBI:18420"/>
        <label>1</label>
    </ligand>
</feature>
<feature type="binding site" evidence="1">
    <location>
        <begin position="110"/>
        <end position="118"/>
    </location>
    <ligand>
        <name>5-phospho-alpha-D-ribose 1-diphosphate</name>
        <dbReference type="ChEBI" id="CHEBI:58017"/>
    </ligand>
</feature>
<feature type="binding site" evidence="1">
    <location>
        <position position="113"/>
    </location>
    <ligand>
        <name>anthranilate</name>
        <dbReference type="ChEBI" id="CHEBI:16567"/>
        <label>1</label>
    </ligand>
</feature>
<feature type="binding site" evidence="1">
    <location>
        <position position="122"/>
    </location>
    <ligand>
        <name>5-phospho-alpha-D-ribose 1-diphosphate</name>
        <dbReference type="ChEBI" id="CHEBI:58017"/>
    </ligand>
</feature>
<feature type="binding site" evidence="1">
    <location>
        <position position="168"/>
    </location>
    <ligand>
        <name>anthranilate</name>
        <dbReference type="ChEBI" id="CHEBI:16567"/>
        <label>2</label>
    </ligand>
</feature>
<feature type="binding site" evidence="1">
    <location>
        <position position="227"/>
    </location>
    <ligand>
        <name>Mg(2+)</name>
        <dbReference type="ChEBI" id="CHEBI:18420"/>
        <label>2</label>
    </ligand>
</feature>
<feature type="binding site" evidence="1">
    <location>
        <position position="228"/>
    </location>
    <ligand>
        <name>Mg(2+)</name>
        <dbReference type="ChEBI" id="CHEBI:18420"/>
        <label>1</label>
    </ligand>
</feature>
<feature type="binding site" evidence="1">
    <location>
        <position position="228"/>
    </location>
    <ligand>
        <name>Mg(2+)</name>
        <dbReference type="ChEBI" id="CHEBI:18420"/>
        <label>2</label>
    </ligand>
</feature>
<name>TRPD_PSEPU</name>
<gene>
    <name evidence="1" type="primary">trpD</name>
</gene>
<proteinExistence type="inferred from homology"/>
<protein>
    <recommendedName>
        <fullName evidence="1">Anthranilate phosphoribosyltransferase</fullName>
        <ecNumber evidence="1">2.4.2.18</ecNumber>
    </recommendedName>
</protein>
<dbReference type="EC" id="2.4.2.18" evidence="1"/>
<dbReference type="EMBL" id="M33799">
    <property type="protein sequence ID" value="AAA80554.1"/>
    <property type="molecule type" value="Genomic_DNA"/>
</dbReference>
<dbReference type="PIR" id="C35115">
    <property type="entry name" value="C35115"/>
</dbReference>
<dbReference type="RefSeq" id="WP_019097608.1">
    <property type="nucleotide sequence ID" value="NZ_AP022324.1"/>
</dbReference>
<dbReference type="SMR" id="P20575"/>
<dbReference type="eggNOG" id="COG0547">
    <property type="taxonomic scope" value="Bacteria"/>
</dbReference>
<dbReference type="UniPathway" id="UPA00035">
    <property type="reaction ID" value="UER00041"/>
</dbReference>
<dbReference type="GO" id="GO:0005829">
    <property type="term" value="C:cytosol"/>
    <property type="evidence" value="ECO:0007669"/>
    <property type="project" value="TreeGrafter"/>
</dbReference>
<dbReference type="GO" id="GO:0004048">
    <property type="term" value="F:anthranilate phosphoribosyltransferase activity"/>
    <property type="evidence" value="ECO:0007669"/>
    <property type="project" value="UniProtKB-UniRule"/>
</dbReference>
<dbReference type="GO" id="GO:0000287">
    <property type="term" value="F:magnesium ion binding"/>
    <property type="evidence" value="ECO:0007669"/>
    <property type="project" value="UniProtKB-UniRule"/>
</dbReference>
<dbReference type="GO" id="GO:0000162">
    <property type="term" value="P:L-tryptophan biosynthetic process"/>
    <property type="evidence" value="ECO:0007669"/>
    <property type="project" value="UniProtKB-UniRule"/>
</dbReference>
<dbReference type="FunFam" id="1.20.970.10:FF:000006">
    <property type="entry name" value="Anthranilate phosphoribosyltransferase"/>
    <property type="match status" value="1"/>
</dbReference>
<dbReference type="FunFam" id="3.40.1030.10:FF:000002">
    <property type="entry name" value="Anthranilate phosphoribosyltransferase"/>
    <property type="match status" value="1"/>
</dbReference>
<dbReference type="Gene3D" id="3.40.1030.10">
    <property type="entry name" value="Nucleoside phosphorylase/phosphoribosyltransferase catalytic domain"/>
    <property type="match status" value="1"/>
</dbReference>
<dbReference type="Gene3D" id="1.20.970.10">
    <property type="entry name" value="Transferase, Pyrimidine Nucleoside Phosphorylase, Chain C"/>
    <property type="match status" value="1"/>
</dbReference>
<dbReference type="HAMAP" id="MF_00211">
    <property type="entry name" value="TrpD"/>
    <property type="match status" value="1"/>
</dbReference>
<dbReference type="InterPro" id="IPR005940">
    <property type="entry name" value="Anthranilate_Pribosyl_Tfrase"/>
</dbReference>
<dbReference type="InterPro" id="IPR000312">
    <property type="entry name" value="Glycosyl_Trfase_fam3"/>
</dbReference>
<dbReference type="InterPro" id="IPR017459">
    <property type="entry name" value="Glycosyl_Trfase_fam3_N_dom"/>
</dbReference>
<dbReference type="InterPro" id="IPR036320">
    <property type="entry name" value="Glycosyl_Trfase_fam3_N_dom_sf"/>
</dbReference>
<dbReference type="InterPro" id="IPR035902">
    <property type="entry name" value="Nuc_phospho_transferase"/>
</dbReference>
<dbReference type="NCBIfam" id="TIGR01245">
    <property type="entry name" value="trpD"/>
    <property type="match status" value="1"/>
</dbReference>
<dbReference type="PANTHER" id="PTHR43285">
    <property type="entry name" value="ANTHRANILATE PHOSPHORIBOSYLTRANSFERASE"/>
    <property type="match status" value="1"/>
</dbReference>
<dbReference type="PANTHER" id="PTHR43285:SF2">
    <property type="entry name" value="ANTHRANILATE PHOSPHORIBOSYLTRANSFERASE"/>
    <property type="match status" value="1"/>
</dbReference>
<dbReference type="Pfam" id="PF02885">
    <property type="entry name" value="Glycos_trans_3N"/>
    <property type="match status" value="1"/>
</dbReference>
<dbReference type="Pfam" id="PF00591">
    <property type="entry name" value="Glycos_transf_3"/>
    <property type="match status" value="1"/>
</dbReference>
<dbReference type="SUPFAM" id="SSF52418">
    <property type="entry name" value="Nucleoside phosphorylase/phosphoribosyltransferase catalytic domain"/>
    <property type="match status" value="1"/>
</dbReference>
<dbReference type="SUPFAM" id="SSF47648">
    <property type="entry name" value="Nucleoside phosphorylase/phosphoribosyltransferase N-terminal domain"/>
    <property type="match status" value="1"/>
</dbReference>
<sequence>MDIKSALSRIVGQLDLTTEEMRDVMRQIMTGQCTEAQIGAFLMGMRMKSESIDEIVGAVSVMRELADKVELKSLDGVVDIVGTGGDGANIFNVSTASSFVLAAAGCTVAKHGNRAVSGKSGSADLLEAAGIYLNLTPTQVARCIDSLGIGFMFAQSHHSAMKHAAGPRRDLGLRTLFNMLGPLTNPAGVKHQVVGVFAQTLCRPLAEVLQRLGSKHVLVVHSKDGLDEFSLAAPTFVAELKNGEITEYWVEPEDLGMKSQSLHGLAVENPQASLELIRDALGRRKTENGQKAAEMIVLNAGAALYAADHAMTLAQGVELAHDVLHTGLAWEKLQELGAFTAVFKVENEA</sequence>
<accession>P20575</accession>